<accession>Q9UTN0</accession>
<name>YII3_SCHPO</name>
<gene>
    <name type="ORF">SPAC139.03</name>
</gene>
<evidence type="ECO:0000255" key="1">
    <source>
        <dbReference type="PROSITE-ProRule" id="PRU00227"/>
    </source>
</evidence>
<evidence type="ECO:0000256" key="2">
    <source>
        <dbReference type="SAM" id="MobiDB-lite"/>
    </source>
</evidence>
<evidence type="ECO:0000269" key="3">
    <source>
    </source>
</evidence>
<dbReference type="EMBL" id="CU329670">
    <property type="protein sequence ID" value="CAB59617.1"/>
    <property type="molecule type" value="Genomic_DNA"/>
</dbReference>
<dbReference type="PIR" id="T37604">
    <property type="entry name" value="T37604"/>
</dbReference>
<dbReference type="SMR" id="Q9UTN0"/>
<dbReference type="BioGRID" id="278443">
    <property type="interactions" value="19"/>
</dbReference>
<dbReference type="FunCoup" id="Q9UTN0">
    <property type="interactions" value="275"/>
</dbReference>
<dbReference type="STRING" id="284812.Q9UTN0"/>
<dbReference type="iPTMnet" id="Q9UTN0"/>
<dbReference type="PaxDb" id="4896-SPAC139.03.1"/>
<dbReference type="EnsemblFungi" id="SPAC139.03.1">
    <property type="protein sequence ID" value="SPAC139.03.1:pep"/>
    <property type="gene ID" value="SPAC139.03"/>
</dbReference>
<dbReference type="KEGG" id="spo:2541956"/>
<dbReference type="PomBase" id="SPAC139.03"/>
<dbReference type="VEuPathDB" id="FungiDB:SPAC139.03"/>
<dbReference type="eggNOG" id="ENOG502REJ9">
    <property type="taxonomic scope" value="Eukaryota"/>
</dbReference>
<dbReference type="HOGENOM" id="CLU_437523_0_0_1"/>
<dbReference type="InParanoid" id="Q9UTN0"/>
<dbReference type="OMA" id="WDDWDAI"/>
<dbReference type="PhylomeDB" id="Q9UTN0"/>
<dbReference type="PRO" id="PR:Q9UTN0"/>
<dbReference type="Proteomes" id="UP000002485">
    <property type="component" value="Chromosome I"/>
</dbReference>
<dbReference type="GO" id="GO:0000785">
    <property type="term" value="C:chromatin"/>
    <property type="evidence" value="ECO:0000314"/>
    <property type="project" value="PomBase"/>
</dbReference>
<dbReference type="GO" id="GO:0005737">
    <property type="term" value="C:cytoplasm"/>
    <property type="evidence" value="ECO:0007669"/>
    <property type="project" value="UniProtKB-KW"/>
</dbReference>
<dbReference type="GO" id="GO:0072686">
    <property type="term" value="C:mitotic spindle"/>
    <property type="evidence" value="ECO:0007005"/>
    <property type="project" value="PomBase"/>
</dbReference>
<dbReference type="GO" id="GO:0005634">
    <property type="term" value="C:nucleus"/>
    <property type="evidence" value="ECO:0007005"/>
    <property type="project" value="PomBase"/>
</dbReference>
<dbReference type="GO" id="GO:0001228">
    <property type="term" value="F:DNA-binding transcription activator activity, RNA polymerase II-specific"/>
    <property type="evidence" value="ECO:0000315"/>
    <property type="project" value="PomBase"/>
</dbReference>
<dbReference type="GO" id="GO:0000978">
    <property type="term" value="F:RNA polymerase II cis-regulatory region sequence-specific DNA binding"/>
    <property type="evidence" value="ECO:0000255"/>
    <property type="project" value="PomBase"/>
</dbReference>
<dbReference type="GO" id="GO:0008270">
    <property type="term" value="F:zinc ion binding"/>
    <property type="evidence" value="ECO:0000255"/>
    <property type="project" value="PomBase"/>
</dbReference>
<dbReference type="GO" id="GO:0006351">
    <property type="term" value="P:DNA-templated transcription"/>
    <property type="evidence" value="ECO:0007669"/>
    <property type="project" value="InterPro"/>
</dbReference>
<dbReference type="GO" id="GO:1903931">
    <property type="term" value="P:positive regulation of pyrimidine-containing compound salvage"/>
    <property type="evidence" value="ECO:0000315"/>
    <property type="project" value="PomBase"/>
</dbReference>
<dbReference type="GO" id="GO:0006357">
    <property type="term" value="P:regulation of transcription by RNA polymerase II"/>
    <property type="evidence" value="ECO:0000315"/>
    <property type="project" value="PomBase"/>
</dbReference>
<dbReference type="CDD" id="cd12148">
    <property type="entry name" value="fungal_TF_MHR"/>
    <property type="match status" value="1"/>
</dbReference>
<dbReference type="CDD" id="cd00067">
    <property type="entry name" value="GAL4"/>
    <property type="match status" value="1"/>
</dbReference>
<dbReference type="FunFam" id="4.10.240.10:FF:000198">
    <property type="entry name" value="Uncharacterized transcriptional regulatory protein C139.03"/>
    <property type="match status" value="1"/>
</dbReference>
<dbReference type="Gene3D" id="4.10.240.10">
    <property type="entry name" value="Zn(2)-C6 fungal-type DNA-binding domain"/>
    <property type="match status" value="1"/>
</dbReference>
<dbReference type="InterPro" id="IPR050613">
    <property type="entry name" value="Sec_Metabolite_Reg"/>
</dbReference>
<dbReference type="InterPro" id="IPR007219">
    <property type="entry name" value="Transcription_factor_dom_fun"/>
</dbReference>
<dbReference type="InterPro" id="IPR036864">
    <property type="entry name" value="Zn2-C6_fun-type_DNA-bd_sf"/>
</dbReference>
<dbReference type="InterPro" id="IPR001138">
    <property type="entry name" value="Zn2Cys6_DnaBD"/>
</dbReference>
<dbReference type="PANTHER" id="PTHR31001">
    <property type="entry name" value="UNCHARACTERIZED TRANSCRIPTIONAL REGULATORY PROTEIN"/>
    <property type="match status" value="1"/>
</dbReference>
<dbReference type="PANTHER" id="PTHR31001:SF40">
    <property type="entry name" value="ZN(II)2CYS6 TRANSCRIPTION FACTOR (EUROFUNG)"/>
    <property type="match status" value="1"/>
</dbReference>
<dbReference type="Pfam" id="PF04082">
    <property type="entry name" value="Fungal_trans"/>
    <property type="match status" value="1"/>
</dbReference>
<dbReference type="Pfam" id="PF00172">
    <property type="entry name" value="Zn_clus"/>
    <property type="match status" value="1"/>
</dbReference>
<dbReference type="SMART" id="SM00906">
    <property type="entry name" value="Fungal_trans"/>
    <property type="match status" value="1"/>
</dbReference>
<dbReference type="SMART" id="SM00066">
    <property type="entry name" value="GAL4"/>
    <property type="match status" value="1"/>
</dbReference>
<dbReference type="SUPFAM" id="SSF57701">
    <property type="entry name" value="Zn2/Cys6 DNA-binding domain"/>
    <property type="match status" value="1"/>
</dbReference>
<dbReference type="PROSITE" id="PS00463">
    <property type="entry name" value="ZN2_CY6_FUNGAL_1"/>
    <property type="match status" value="1"/>
</dbReference>
<dbReference type="PROSITE" id="PS50048">
    <property type="entry name" value="ZN2_CY6_FUNGAL_2"/>
    <property type="match status" value="1"/>
</dbReference>
<keyword id="KW-0963">Cytoplasm</keyword>
<keyword id="KW-0206">Cytoskeleton</keyword>
<keyword id="KW-0238">DNA-binding</keyword>
<keyword id="KW-0479">Metal-binding</keyword>
<keyword id="KW-0539">Nucleus</keyword>
<keyword id="KW-1185">Reference proteome</keyword>
<keyword id="KW-0804">Transcription</keyword>
<keyword id="KW-0805">Transcription regulation</keyword>
<keyword id="KW-0862">Zinc</keyword>
<protein>
    <recommendedName>
        <fullName>Uncharacterized transcriptional regulatory protein C139.03</fullName>
    </recommendedName>
</protein>
<comment type="subcellular location">
    <subcellularLocation>
        <location evidence="1 3">Nucleus</location>
    </subcellularLocation>
    <subcellularLocation>
        <location evidence="3">Cytoplasm</location>
        <location evidence="3">Cytoskeleton</location>
        <location evidence="3">Spindle</location>
    </subcellularLocation>
</comment>
<feature type="chain" id="PRO_0000310386" description="Uncharacterized transcriptional regulatory protein C139.03">
    <location>
        <begin position="1"/>
        <end position="625"/>
    </location>
</feature>
<feature type="DNA-binding region" description="Zn(2)-C6 fungal-type" evidence="1">
    <location>
        <begin position="23"/>
        <end position="51"/>
    </location>
</feature>
<feature type="region of interest" description="Disordered" evidence="2">
    <location>
        <begin position="93"/>
        <end position="119"/>
    </location>
</feature>
<feature type="compositionally biased region" description="Polar residues" evidence="2">
    <location>
        <begin position="93"/>
        <end position="113"/>
    </location>
</feature>
<proteinExistence type="inferred from homology"/>
<organism>
    <name type="scientific">Schizosaccharomyces pombe (strain 972 / ATCC 24843)</name>
    <name type="common">Fission yeast</name>
    <dbReference type="NCBI Taxonomy" id="284812"/>
    <lineage>
        <taxon>Eukaryota</taxon>
        <taxon>Fungi</taxon>
        <taxon>Dikarya</taxon>
        <taxon>Ascomycota</taxon>
        <taxon>Taphrinomycotina</taxon>
        <taxon>Schizosaccharomycetes</taxon>
        <taxon>Schizosaccharomycetales</taxon>
        <taxon>Schizosaccharomycetaceae</taxon>
        <taxon>Schizosaccharomyces</taxon>
    </lineage>
</organism>
<sequence>MSETTKSGSKKSGQTSRRAIHSCLACRRKKLKCDHGRPCSNCLKRSTIQSCIYIDPGKTNYDKRFERGSEADELIDQLLSRVSMLEKRLNEVGTKSQSDYENQQSHNLPSTPSADAETQRNIGSLSVLDDTKSQYANYSSSSHVLWHLRNYHYLNLDQDIQEENDSLISPFFFRISPNESAYDYLPPKKVSDILIEQFFFRCHMLINVLHRPTFYVRYNDFWEKPHLRKPAFTSLLYAIYASALLATPVEVQKTWALGEDERYLQVDYHQAFRYALASSNFLFEPDLNALQALVLCQVVFDSDRIRAPPSLVGLILHVALCMGLHRDGSLYGLNPVISEIRRRVWANIVLSDLRTSETIGYPPQIVEGNYDTRLPSALPDEIHNVDSSVIISEATFVNIITKVSRAYSKCLKVLLGIIAPNYTRLLELDRELSNFFKELIEVNIPTSNTMHERHIRLLVSYLSNRFPILLHFPFLLKKNSAQFAYSHSRALESATLALNQLYELGSNPEYSKYSWYLWRYPPFHPCIVLLLDLLNSQKIIYLDDERVVLLNKIFSLFPRSSGKEHYQKAWALLQTSRAKVWEKLGLSTVDVSTTDVRLTNFEFFDANNLDINWDDWDAIFQHCPF</sequence>
<reference key="1">
    <citation type="journal article" date="2002" name="Nature">
        <title>The genome sequence of Schizosaccharomyces pombe.</title>
        <authorList>
            <person name="Wood V."/>
            <person name="Gwilliam R."/>
            <person name="Rajandream M.A."/>
            <person name="Lyne M.H."/>
            <person name="Lyne R."/>
            <person name="Stewart A."/>
            <person name="Sgouros J.G."/>
            <person name="Peat N."/>
            <person name="Hayles J."/>
            <person name="Baker S.G."/>
            <person name="Basham D."/>
            <person name="Bowman S."/>
            <person name="Brooks K."/>
            <person name="Brown D."/>
            <person name="Brown S."/>
            <person name="Chillingworth T."/>
            <person name="Churcher C.M."/>
            <person name="Collins M."/>
            <person name="Connor R."/>
            <person name="Cronin A."/>
            <person name="Davis P."/>
            <person name="Feltwell T."/>
            <person name="Fraser A."/>
            <person name="Gentles S."/>
            <person name="Goble A."/>
            <person name="Hamlin N."/>
            <person name="Harris D.E."/>
            <person name="Hidalgo J."/>
            <person name="Hodgson G."/>
            <person name="Holroyd S."/>
            <person name="Hornsby T."/>
            <person name="Howarth S."/>
            <person name="Huckle E.J."/>
            <person name="Hunt S."/>
            <person name="Jagels K."/>
            <person name="James K.D."/>
            <person name="Jones L."/>
            <person name="Jones M."/>
            <person name="Leather S."/>
            <person name="McDonald S."/>
            <person name="McLean J."/>
            <person name="Mooney P."/>
            <person name="Moule S."/>
            <person name="Mungall K.L."/>
            <person name="Murphy L.D."/>
            <person name="Niblett D."/>
            <person name="Odell C."/>
            <person name="Oliver K."/>
            <person name="O'Neil S."/>
            <person name="Pearson D."/>
            <person name="Quail M.A."/>
            <person name="Rabbinowitsch E."/>
            <person name="Rutherford K.M."/>
            <person name="Rutter S."/>
            <person name="Saunders D."/>
            <person name="Seeger K."/>
            <person name="Sharp S."/>
            <person name="Skelton J."/>
            <person name="Simmonds M.N."/>
            <person name="Squares R."/>
            <person name="Squares S."/>
            <person name="Stevens K."/>
            <person name="Taylor K."/>
            <person name="Taylor R.G."/>
            <person name="Tivey A."/>
            <person name="Walsh S.V."/>
            <person name="Warren T."/>
            <person name="Whitehead S."/>
            <person name="Woodward J.R."/>
            <person name="Volckaert G."/>
            <person name="Aert R."/>
            <person name="Robben J."/>
            <person name="Grymonprez B."/>
            <person name="Weltjens I."/>
            <person name="Vanstreels E."/>
            <person name="Rieger M."/>
            <person name="Schaefer M."/>
            <person name="Mueller-Auer S."/>
            <person name="Gabel C."/>
            <person name="Fuchs M."/>
            <person name="Duesterhoeft A."/>
            <person name="Fritzc C."/>
            <person name="Holzer E."/>
            <person name="Moestl D."/>
            <person name="Hilbert H."/>
            <person name="Borzym K."/>
            <person name="Langer I."/>
            <person name="Beck A."/>
            <person name="Lehrach H."/>
            <person name="Reinhardt R."/>
            <person name="Pohl T.M."/>
            <person name="Eger P."/>
            <person name="Zimmermann W."/>
            <person name="Wedler H."/>
            <person name="Wambutt R."/>
            <person name="Purnelle B."/>
            <person name="Goffeau A."/>
            <person name="Cadieu E."/>
            <person name="Dreano S."/>
            <person name="Gloux S."/>
            <person name="Lelaure V."/>
            <person name="Mottier S."/>
            <person name="Galibert F."/>
            <person name="Aves S.J."/>
            <person name="Xiang Z."/>
            <person name="Hunt C."/>
            <person name="Moore K."/>
            <person name="Hurst S.M."/>
            <person name="Lucas M."/>
            <person name="Rochet M."/>
            <person name="Gaillardin C."/>
            <person name="Tallada V.A."/>
            <person name="Garzon A."/>
            <person name="Thode G."/>
            <person name="Daga R.R."/>
            <person name="Cruzado L."/>
            <person name="Jimenez J."/>
            <person name="Sanchez M."/>
            <person name="del Rey F."/>
            <person name="Benito J."/>
            <person name="Dominguez A."/>
            <person name="Revuelta J.L."/>
            <person name="Moreno S."/>
            <person name="Armstrong J."/>
            <person name="Forsburg S.L."/>
            <person name="Cerutti L."/>
            <person name="Lowe T."/>
            <person name="McCombie W.R."/>
            <person name="Paulsen I."/>
            <person name="Potashkin J."/>
            <person name="Shpakovski G.V."/>
            <person name="Ussery D."/>
            <person name="Barrell B.G."/>
            <person name="Nurse P."/>
        </authorList>
    </citation>
    <scope>NUCLEOTIDE SEQUENCE [LARGE SCALE GENOMIC DNA]</scope>
    <source>
        <strain>972 / ATCC 24843</strain>
    </source>
</reference>
<reference key="2">
    <citation type="journal article" date="2006" name="Nat. Biotechnol.">
        <title>ORFeome cloning and global analysis of protein localization in the fission yeast Schizosaccharomyces pombe.</title>
        <authorList>
            <person name="Matsuyama A."/>
            <person name="Arai R."/>
            <person name="Yashiroda Y."/>
            <person name="Shirai A."/>
            <person name="Kamata A."/>
            <person name="Sekido S."/>
            <person name="Kobayashi Y."/>
            <person name="Hashimoto A."/>
            <person name="Hamamoto M."/>
            <person name="Hiraoka Y."/>
            <person name="Horinouchi S."/>
            <person name="Yoshida M."/>
        </authorList>
    </citation>
    <scope>SUBCELLULAR LOCATION [LARGE SCALE ANALYSIS]</scope>
</reference>